<reference key="1">
    <citation type="journal article" date="2002" name="Nature">
        <title>The genome sequence of Schizosaccharomyces pombe.</title>
        <authorList>
            <person name="Wood V."/>
            <person name="Gwilliam R."/>
            <person name="Rajandream M.A."/>
            <person name="Lyne M.H."/>
            <person name="Lyne R."/>
            <person name="Stewart A."/>
            <person name="Sgouros J.G."/>
            <person name="Peat N."/>
            <person name="Hayles J."/>
            <person name="Baker S.G."/>
            <person name="Basham D."/>
            <person name="Bowman S."/>
            <person name="Brooks K."/>
            <person name="Brown D."/>
            <person name="Brown S."/>
            <person name="Chillingworth T."/>
            <person name="Churcher C.M."/>
            <person name="Collins M."/>
            <person name="Connor R."/>
            <person name="Cronin A."/>
            <person name="Davis P."/>
            <person name="Feltwell T."/>
            <person name="Fraser A."/>
            <person name="Gentles S."/>
            <person name="Goble A."/>
            <person name="Hamlin N."/>
            <person name="Harris D.E."/>
            <person name="Hidalgo J."/>
            <person name="Hodgson G."/>
            <person name="Holroyd S."/>
            <person name="Hornsby T."/>
            <person name="Howarth S."/>
            <person name="Huckle E.J."/>
            <person name="Hunt S."/>
            <person name="Jagels K."/>
            <person name="James K.D."/>
            <person name="Jones L."/>
            <person name="Jones M."/>
            <person name="Leather S."/>
            <person name="McDonald S."/>
            <person name="McLean J."/>
            <person name="Mooney P."/>
            <person name="Moule S."/>
            <person name="Mungall K.L."/>
            <person name="Murphy L.D."/>
            <person name="Niblett D."/>
            <person name="Odell C."/>
            <person name="Oliver K."/>
            <person name="O'Neil S."/>
            <person name="Pearson D."/>
            <person name="Quail M.A."/>
            <person name="Rabbinowitsch E."/>
            <person name="Rutherford K.M."/>
            <person name="Rutter S."/>
            <person name="Saunders D."/>
            <person name="Seeger K."/>
            <person name="Sharp S."/>
            <person name="Skelton J."/>
            <person name="Simmonds M.N."/>
            <person name="Squares R."/>
            <person name="Squares S."/>
            <person name="Stevens K."/>
            <person name="Taylor K."/>
            <person name="Taylor R.G."/>
            <person name="Tivey A."/>
            <person name="Walsh S.V."/>
            <person name="Warren T."/>
            <person name="Whitehead S."/>
            <person name="Woodward J.R."/>
            <person name="Volckaert G."/>
            <person name="Aert R."/>
            <person name="Robben J."/>
            <person name="Grymonprez B."/>
            <person name="Weltjens I."/>
            <person name="Vanstreels E."/>
            <person name="Rieger M."/>
            <person name="Schaefer M."/>
            <person name="Mueller-Auer S."/>
            <person name="Gabel C."/>
            <person name="Fuchs M."/>
            <person name="Duesterhoeft A."/>
            <person name="Fritzc C."/>
            <person name="Holzer E."/>
            <person name="Moestl D."/>
            <person name="Hilbert H."/>
            <person name="Borzym K."/>
            <person name="Langer I."/>
            <person name="Beck A."/>
            <person name="Lehrach H."/>
            <person name="Reinhardt R."/>
            <person name="Pohl T.M."/>
            <person name="Eger P."/>
            <person name="Zimmermann W."/>
            <person name="Wedler H."/>
            <person name="Wambutt R."/>
            <person name="Purnelle B."/>
            <person name="Goffeau A."/>
            <person name="Cadieu E."/>
            <person name="Dreano S."/>
            <person name="Gloux S."/>
            <person name="Lelaure V."/>
            <person name="Mottier S."/>
            <person name="Galibert F."/>
            <person name="Aves S.J."/>
            <person name="Xiang Z."/>
            <person name="Hunt C."/>
            <person name="Moore K."/>
            <person name="Hurst S.M."/>
            <person name="Lucas M."/>
            <person name="Rochet M."/>
            <person name="Gaillardin C."/>
            <person name="Tallada V.A."/>
            <person name="Garzon A."/>
            <person name="Thode G."/>
            <person name="Daga R.R."/>
            <person name="Cruzado L."/>
            <person name="Jimenez J."/>
            <person name="Sanchez M."/>
            <person name="del Rey F."/>
            <person name="Benito J."/>
            <person name="Dominguez A."/>
            <person name="Revuelta J.L."/>
            <person name="Moreno S."/>
            <person name="Armstrong J."/>
            <person name="Forsburg S.L."/>
            <person name="Cerutti L."/>
            <person name="Lowe T."/>
            <person name="McCombie W.R."/>
            <person name="Paulsen I."/>
            <person name="Potashkin J."/>
            <person name="Shpakovski G.V."/>
            <person name="Ussery D."/>
            <person name="Barrell B.G."/>
            <person name="Nurse P."/>
        </authorList>
    </citation>
    <scope>NUCLEOTIDE SEQUENCE [LARGE SCALE GENOMIC DNA]</scope>
    <source>
        <strain>972 / ATCC 24843</strain>
    </source>
</reference>
<reference key="2">
    <citation type="journal article" date="2005" name="Mol. Biol. Cell">
        <title>Profilin-mediated competition between capping protein and formin Cdc12p during cytokinesis in fission yeast.</title>
        <authorList>
            <person name="Kovar D.R."/>
            <person name="Wu J.-Q."/>
            <person name="Pollard T.D."/>
        </authorList>
    </citation>
    <scope>FUNCTION</scope>
    <scope>SUBUNIT</scope>
    <scope>SUBCELLULAR LOCATION</scope>
</reference>
<reference key="3">
    <citation type="journal article" date="2006" name="Nat. Biotechnol.">
        <title>ORFeome cloning and global analysis of protein localization in the fission yeast Schizosaccharomyces pombe.</title>
        <authorList>
            <person name="Matsuyama A."/>
            <person name="Arai R."/>
            <person name="Yashiroda Y."/>
            <person name="Shirai A."/>
            <person name="Kamata A."/>
            <person name="Sekido S."/>
            <person name="Kobayashi Y."/>
            <person name="Hashimoto A."/>
            <person name="Hamamoto M."/>
            <person name="Hiraoka Y."/>
            <person name="Horinouchi S."/>
            <person name="Yoshida M."/>
        </authorList>
    </citation>
    <scope>SUBCELLULAR LOCATION [LARGE SCALE ANALYSIS]</scope>
</reference>
<reference key="4">
    <citation type="journal article" date="2008" name="J. Proteome Res.">
        <title>Phosphoproteome analysis of fission yeast.</title>
        <authorList>
            <person name="Wilson-Grady J.T."/>
            <person name="Villen J."/>
            <person name="Gygi S.P."/>
        </authorList>
    </citation>
    <scope>PHOSPHORYLATION [LARGE SCALE ANALYSIS] AT SER-31</scope>
    <scope>IDENTIFICATION BY MASS SPECTROMETRY</scope>
</reference>
<keyword id="KW-0117">Actin capping</keyword>
<keyword id="KW-0009">Actin-binding</keyword>
<keyword id="KW-0963">Cytoplasm</keyword>
<keyword id="KW-0206">Cytoskeleton</keyword>
<keyword id="KW-0597">Phosphoprotein</keyword>
<keyword id="KW-1185">Reference proteome</keyword>
<name>CAPZA_SCHPO</name>
<protein>
    <recommendedName>
        <fullName>F-actin-capping protein subunit alpha</fullName>
    </recommendedName>
</protein>
<proteinExistence type="evidence at protein level"/>
<evidence type="ECO:0000269" key="1">
    <source>
    </source>
</evidence>
<evidence type="ECO:0000269" key="2">
    <source>
    </source>
</evidence>
<evidence type="ECO:0000269" key="3">
    <source>
    </source>
</evidence>
<evidence type="ECO:0000305" key="4"/>
<accession>Q10434</accession>
<dbReference type="EMBL" id="CU329670">
    <property type="protein sequence ID" value="CAA94697.1"/>
    <property type="molecule type" value="Genomic_DNA"/>
</dbReference>
<dbReference type="PIR" id="T37574">
    <property type="entry name" value="T37574"/>
</dbReference>
<dbReference type="RefSeq" id="NP_594639.1">
    <property type="nucleotide sequence ID" value="NM_001020067.2"/>
</dbReference>
<dbReference type="SMR" id="Q10434"/>
<dbReference type="BioGRID" id="279132">
    <property type="interactions" value="28"/>
</dbReference>
<dbReference type="FunCoup" id="Q10434">
    <property type="interactions" value="248"/>
</dbReference>
<dbReference type="MINT" id="Q10434"/>
<dbReference type="STRING" id="284812.Q10434"/>
<dbReference type="iPTMnet" id="Q10434"/>
<dbReference type="PaxDb" id="4896-SPAC12B10.07.1"/>
<dbReference type="EnsemblFungi" id="SPAC12B10.07.1">
    <property type="protein sequence ID" value="SPAC12B10.07.1:pep"/>
    <property type="gene ID" value="SPAC12B10.07"/>
</dbReference>
<dbReference type="GeneID" id="2542679"/>
<dbReference type="KEGG" id="spo:2542679"/>
<dbReference type="PomBase" id="SPAC12B10.07">
    <property type="gene designation" value="acp1"/>
</dbReference>
<dbReference type="VEuPathDB" id="FungiDB:SPAC12B10.07"/>
<dbReference type="eggNOG" id="KOG0836">
    <property type="taxonomic scope" value="Eukaryota"/>
</dbReference>
<dbReference type="HOGENOM" id="CLU_045161_3_0_1"/>
<dbReference type="InParanoid" id="Q10434"/>
<dbReference type="OMA" id="VACIEDH"/>
<dbReference type="PhylomeDB" id="Q10434"/>
<dbReference type="Reactome" id="R-SPO-983231">
    <property type="pathway name" value="Factors involved in megakaryocyte development and platelet production"/>
</dbReference>
<dbReference type="PRO" id="PR:Q10434"/>
<dbReference type="Proteomes" id="UP000002485">
    <property type="component" value="Chromosome I"/>
</dbReference>
<dbReference type="GO" id="GO:0030479">
    <property type="term" value="C:actin cortical patch"/>
    <property type="evidence" value="ECO:0000314"/>
    <property type="project" value="PomBase"/>
</dbReference>
<dbReference type="GO" id="GO:0032153">
    <property type="term" value="C:cell division site"/>
    <property type="evidence" value="ECO:0007005"/>
    <property type="project" value="PomBase"/>
</dbReference>
<dbReference type="GO" id="GO:0051286">
    <property type="term" value="C:cell tip"/>
    <property type="evidence" value="ECO:0007005"/>
    <property type="project" value="PomBase"/>
</dbReference>
<dbReference type="GO" id="GO:0030863">
    <property type="term" value="C:cortical cytoskeleton"/>
    <property type="evidence" value="ECO:0000318"/>
    <property type="project" value="GO_Central"/>
</dbReference>
<dbReference type="GO" id="GO:0008290">
    <property type="term" value="C:F-actin capping protein complex"/>
    <property type="evidence" value="ECO:0000314"/>
    <property type="project" value="PomBase"/>
</dbReference>
<dbReference type="GO" id="GO:0051015">
    <property type="term" value="F:actin filament binding"/>
    <property type="evidence" value="ECO:0000314"/>
    <property type="project" value="PomBase"/>
</dbReference>
<dbReference type="GO" id="GO:0044396">
    <property type="term" value="P:actin cortical patch organization"/>
    <property type="evidence" value="ECO:0000315"/>
    <property type="project" value="PomBase"/>
</dbReference>
<dbReference type="GO" id="GO:0030036">
    <property type="term" value="P:actin cytoskeleton organization"/>
    <property type="evidence" value="ECO:0000316"/>
    <property type="project" value="PomBase"/>
</dbReference>
<dbReference type="GO" id="GO:0051016">
    <property type="term" value="P:barbed-end actin filament capping"/>
    <property type="evidence" value="ECO:0000314"/>
    <property type="project" value="PomBase"/>
</dbReference>
<dbReference type="GO" id="GO:1904600">
    <property type="term" value="P:mating projection actin fusion focus assembly"/>
    <property type="evidence" value="ECO:0000315"/>
    <property type="project" value="PomBase"/>
</dbReference>
<dbReference type="GO" id="GO:1903475">
    <property type="term" value="P:mitotic actomyosin contractile ring assembly"/>
    <property type="evidence" value="ECO:0000316"/>
    <property type="project" value="PomBase"/>
</dbReference>
<dbReference type="GO" id="GO:1902404">
    <property type="term" value="P:mitotic actomyosin contractile ring contraction"/>
    <property type="evidence" value="ECO:0000315"/>
    <property type="project" value="PomBase"/>
</dbReference>
<dbReference type="Gene3D" id="3.30.1140.60">
    <property type="entry name" value="F-actin capping protein, alpha subunit"/>
    <property type="match status" value="1"/>
</dbReference>
<dbReference type="Gene3D" id="3.90.1150.210">
    <property type="entry name" value="F-actin capping protein, beta subunit"/>
    <property type="match status" value="1"/>
</dbReference>
<dbReference type="InterPro" id="IPR002189">
    <property type="entry name" value="CapZ_alpha"/>
</dbReference>
<dbReference type="InterPro" id="IPR037282">
    <property type="entry name" value="CapZ_alpha/beta"/>
</dbReference>
<dbReference type="InterPro" id="IPR042276">
    <property type="entry name" value="CapZ_alpha/beta_2"/>
</dbReference>
<dbReference type="InterPro" id="IPR042489">
    <property type="entry name" value="CapZ_alpha_1"/>
</dbReference>
<dbReference type="InterPro" id="IPR017865">
    <property type="entry name" value="F-actin_cap_asu_CS"/>
</dbReference>
<dbReference type="PANTHER" id="PTHR10653">
    <property type="entry name" value="F-ACTIN-CAPPING PROTEIN SUBUNIT ALPHA"/>
    <property type="match status" value="1"/>
</dbReference>
<dbReference type="PANTHER" id="PTHR10653:SF0">
    <property type="entry name" value="F-ACTIN-CAPPING PROTEIN SUBUNIT ALPHA"/>
    <property type="match status" value="1"/>
</dbReference>
<dbReference type="Pfam" id="PF01267">
    <property type="entry name" value="F-actin_cap_A"/>
    <property type="match status" value="1"/>
</dbReference>
<dbReference type="PRINTS" id="PR00191">
    <property type="entry name" value="FACTINCAPA"/>
</dbReference>
<dbReference type="SUPFAM" id="SSF90096">
    <property type="entry name" value="Subunits of heterodimeric actin filament capping protein Capz"/>
    <property type="match status" value="1"/>
</dbReference>
<dbReference type="PROSITE" id="PS00748">
    <property type="entry name" value="F_ACTIN_CAPPING_A_1"/>
    <property type="match status" value="1"/>
</dbReference>
<dbReference type="PROSITE" id="PS00749">
    <property type="entry name" value="F_ACTIN_CAPPING_A_2"/>
    <property type="match status" value="1"/>
</dbReference>
<comment type="function">
    <text evidence="1">F-actin-capping proteins bind in a Ca(2+)-independent manner to the fast growing ends of actin filaments (barbed end) thereby blocking the exchange of subunits at these ends. Unlike other capping proteins (such as gelsolin and severin), these proteins do not sever actin filaments. Competes with formin cdc12 for attachment to the actin filaments barbed ends. Slowly replaces cdc12 on the barbed ends in preparation for filament disassembly during contractile ring constriction.</text>
</comment>
<comment type="subunit">
    <text evidence="1">Component of the F-actin capping complex, composed of a heterodimer of an alpha and a beta subunit.</text>
</comment>
<comment type="subcellular location">
    <subcellularLocation>
        <location evidence="1 2">Cytoplasm</location>
    </subcellularLocation>
    <subcellularLocation>
        <location evidence="1">Cytoplasm</location>
        <location evidence="1">Cytoskeleton</location>
        <location evidence="1">Actin patch</location>
    </subcellularLocation>
    <subcellularLocation>
        <location evidence="1">Cytoplasm</location>
        <location evidence="1">Cytoskeleton</location>
    </subcellularLocation>
    <text evidence="1">Localizes to the actomyosin contractile ring. Localizes to cell tips during interphase.</text>
</comment>
<comment type="similarity">
    <text evidence="4">Belongs to the F-actin-capping protein alpha subunit family.</text>
</comment>
<sequence length="256" mass="29808">MEKEAIYKLIRESPPGEVNQVVHDIRDIGLSDEEAIHEQLKLYHEDYNSSVSISDDEKVIISADNRLEGNRYYDQVLQKSFTINYETMEAENVEDYTEAIKIPDEIVKQIKKVASDHYLSDVTFGIIKKSDEVESFTIVLVSSKYNPKNYWNGSWRCICNYNVSEKKLEGRSHIRVHYYEDGNVWLDASRPISATVEETSKLYEVLAQVENGIQQSFNVELSSLNDKKFKELRRQLPVTRQKINWENVSGIRMRNT</sequence>
<organism>
    <name type="scientific">Schizosaccharomyces pombe (strain 972 / ATCC 24843)</name>
    <name type="common">Fission yeast</name>
    <dbReference type="NCBI Taxonomy" id="284812"/>
    <lineage>
        <taxon>Eukaryota</taxon>
        <taxon>Fungi</taxon>
        <taxon>Dikarya</taxon>
        <taxon>Ascomycota</taxon>
        <taxon>Taphrinomycotina</taxon>
        <taxon>Schizosaccharomycetes</taxon>
        <taxon>Schizosaccharomycetales</taxon>
        <taxon>Schizosaccharomycetaceae</taxon>
        <taxon>Schizosaccharomyces</taxon>
    </lineage>
</organism>
<gene>
    <name type="primary">acp1</name>
    <name type="ORF">SPAC12B10.07</name>
</gene>
<feature type="chain" id="PRO_0000208645" description="F-actin-capping protein subunit alpha">
    <location>
        <begin position="1"/>
        <end position="256"/>
    </location>
</feature>
<feature type="modified residue" description="Phosphoserine" evidence="3">
    <location>
        <position position="31"/>
    </location>
</feature>